<dbReference type="EMBL" id="Z49427">
    <property type="protein sequence ID" value="CAA89446.1"/>
    <property type="molecule type" value="Genomic_DNA"/>
</dbReference>
<dbReference type="EMBL" id="X87371">
    <property type="protein sequence ID" value="CAA60803.1"/>
    <property type="molecule type" value="Genomic_DNA"/>
</dbReference>
<dbReference type="PIR" id="S55161">
    <property type="entry name" value="S55161"/>
</dbReference>
<dbReference type="DIP" id="DIP-5285N"/>
<dbReference type="IntAct" id="P47003">
    <property type="interactions" value="1"/>
</dbReference>
<dbReference type="PaxDb" id="4932-YJL152W"/>
<dbReference type="EnsemblFungi" id="YJL152W_mRNA">
    <property type="protein sequence ID" value="YJL152W"/>
    <property type="gene ID" value="YJL152W"/>
</dbReference>
<dbReference type="AGR" id="SGD:S000003688"/>
<dbReference type="SGD" id="S000003688">
    <property type="gene designation" value="YJL152W"/>
</dbReference>
<dbReference type="HOGENOM" id="CLU_2063326_0_0_1"/>
<dbReference type="ChiTaRS" id="YJL152W">
    <property type="organism name" value="yeast"/>
</dbReference>
<dbReference type="GO" id="GO:0016020">
    <property type="term" value="C:membrane"/>
    <property type="evidence" value="ECO:0007669"/>
    <property type="project" value="UniProtKB-SubCell"/>
</dbReference>
<sequence length="119" mass="13653">MPHLAAEAHTWPPHISHSTLSIPHPTPEHRHVFHKKDVKNKRNEEKGNNLLYVLFRTTVIKSSFRSLSTAGRELLFVVHQGHIGTGLIVFIICWRLCLRFLCRVSFQVTVYGGRSRMSA</sequence>
<feature type="chain" id="PRO_0000203029" description="Putative uncharacterized protein YJL152W">
    <location>
        <begin position="1"/>
        <end position="119"/>
    </location>
</feature>
<feature type="transmembrane region" description="Helical" evidence="1">
    <location>
        <begin position="74"/>
        <end position="94"/>
    </location>
</feature>
<feature type="region of interest" description="Disordered" evidence="2">
    <location>
        <begin position="1"/>
        <end position="20"/>
    </location>
</feature>
<comment type="subcellular location">
    <subcellularLocation>
        <location evidence="3">Membrane</location>
        <topology evidence="3">Single-pass membrane protein</topology>
    </subcellularLocation>
</comment>
<comment type="caution">
    <text evidence="4">Product of a dubious gene prediction unlikely to encode a functional protein. Because of that it is not part of the S.cerevisiae S288c complete/reference proteome set.</text>
</comment>
<accession>P47003</accession>
<gene>
    <name type="ordered locus">YJL152W</name>
    <name type="ORF">J0628</name>
</gene>
<protein>
    <recommendedName>
        <fullName>Putative uncharacterized protein YJL152W</fullName>
    </recommendedName>
</protein>
<organism>
    <name type="scientific">Saccharomyces cerevisiae (strain ATCC 204508 / S288c)</name>
    <name type="common">Baker's yeast</name>
    <dbReference type="NCBI Taxonomy" id="559292"/>
    <lineage>
        <taxon>Eukaryota</taxon>
        <taxon>Fungi</taxon>
        <taxon>Dikarya</taxon>
        <taxon>Ascomycota</taxon>
        <taxon>Saccharomycotina</taxon>
        <taxon>Saccharomycetes</taxon>
        <taxon>Saccharomycetales</taxon>
        <taxon>Saccharomycetaceae</taxon>
        <taxon>Saccharomyces</taxon>
    </lineage>
</organism>
<evidence type="ECO:0000255" key="1"/>
<evidence type="ECO:0000256" key="2">
    <source>
        <dbReference type="SAM" id="MobiDB-lite"/>
    </source>
</evidence>
<evidence type="ECO:0000305" key="3"/>
<evidence type="ECO:0000305" key="4">
    <source>
    </source>
</evidence>
<name>YJP2_YEAST</name>
<proteinExistence type="uncertain"/>
<reference key="1">
    <citation type="journal article" date="1996" name="Yeast">
        <title>Sequence analysis of a 40.7 kb segment from the left arm of yeast chromosome X reveals 14 known genes and 13 new open reading frames including homologues of genes clustered on the right arm of chromosome XI.</title>
        <authorList>
            <person name="Katsoulou C."/>
            <person name="Tzermia M."/>
            <person name="Tavernarakis N."/>
            <person name="Alexandraki D."/>
        </authorList>
    </citation>
    <scope>NUCLEOTIDE SEQUENCE [GENOMIC DNA]</scope>
    <source>
        <strain>ATCC 96604 / S288c / FY1679</strain>
    </source>
</reference>
<reference key="2">
    <citation type="journal article" date="1996" name="EMBO J.">
        <title>Complete nucleotide sequence of Saccharomyces cerevisiae chromosome X.</title>
        <authorList>
            <person name="Galibert F."/>
            <person name="Alexandraki D."/>
            <person name="Baur A."/>
            <person name="Boles E."/>
            <person name="Chalwatzis N."/>
            <person name="Chuat J.-C."/>
            <person name="Coster F."/>
            <person name="Cziepluch C."/>
            <person name="de Haan M."/>
            <person name="Domdey H."/>
            <person name="Durand P."/>
            <person name="Entian K.-D."/>
            <person name="Gatius M."/>
            <person name="Goffeau A."/>
            <person name="Grivell L.A."/>
            <person name="Hennemann A."/>
            <person name="Herbert C.J."/>
            <person name="Heumann K."/>
            <person name="Hilger F."/>
            <person name="Hollenberg C.P."/>
            <person name="Huang M.-E."/>
            <person name="Jacq C."/>
            <person name="Jauniaux J.-C."/>
            <person name="Katsoulou C."/>
            <person name="Kirchrath L."/>
            <person name="Kleine K."/>
            <person name="Kordes E."/>
            <person name="Koetter P."/>
            <person name="Liebl S."/>
            <person name="Louis E.J."/>
            <person name="Manus V."/>
            <person name="Mewes H.-W."/>
            <person name="Miosga T."/>
            <person name="Obermaier B."/>
            <person name="Perea J."/>
            <person name="Pohl T.M."/>
            <person name="Portetelle D."/>
            <person name="Pujol A."/>
            <person name="Purnelle B."/>
            <person name="Ramezani Rad M."/>
            <person name="Rasmussen S.W."/>
            <person name="Rose M."/>
            <person name="Rossau R."/>
            <person name="Schaaff-Gerstenschlaeger I."/>
            <person name="Smits P.H.M."/>
            <person name="Scarcez T."/>
            <person name="Soriano N."/>
            <person name="To Van D."/>
            <person name="Tzermia M."/>
            <person name="Van Broekhoven A."/>
            <person name="Vandenbol M."/>
            <person name="Wedler H."/>
            <person name="von Wettstein D."/>
            <person name="Wambutt R."/>
            <person name="Zagulski M."/>
            <person name="Zollner A."/>
            <person name="Karpfinger-Hartl L."/>
        </authorList>
    </citation>
    <scope>NUCLEOTIDE SEQUENCE [LARGE SCALE GENOMIC DNA]</scope>
    <source>
        <strain>ATCC 204508 / S288c</strain>
    </source>
</reference>
<reference key="3">
    <citation type="journal article" date="2014" name="G3 (Bethesda)">
        <title>The reference genome sequence of Saccharomyces cerevisiae: Then and now.</title>
        <authorList>
            <person name="Engel S.R."/>
            <person name="Dietrich F.S."/>
            <person name="Fisk D.G."/>
            <person name="Binkley G."/>
            <person name="Balakrishnan R."/>
            <person name="Costanzo M.C."/>
            <person name="Dwight S.S."/>
            <person name="Hitz B.C."/>
            <person name="Karra K."/>
            <person name="Nash R.S."/>
            <person name="Weng S."/>
            <person name="Wong E.D."/>
            <person name="Lloyd P."/>
            <person name="Skrzypek M.S."/>
            <person name="Miyasato S.R."/>
            <person name="Simison M."/>
            <person name="Cherry J.M."/>
        </authorList>
    </citation>
    <scope>GENOME REANNOTATION</scope>
    <source>
        <strain>ATCC 204508 / S288c</strain>
    </source>
</reference>
<keyword id="KW-0472">Membrane</keyword>
<keyword id="KW-0812">Transmembrane</keyword>
<keyword id="KW-1133">Transmembrane helix</keyword>